<dbReference type="EC" id="2.8.1.10" evidence="1"/>
<dbReference type="EMBL" id="AE008923">
    <property type="protein sequence ID" value="AAM38145.1"/>
    <property type="molecule type" value="Genomic_DNA"/>
</dbReference>
<dbReference type="RefSeq" id="WP_003487184.1">
    <property type="nucleotide sequence ID" value="NC_003919.1"/>
</dbReference>
<dbReference type="SMR" id="Q8PHF5"/>
<dbReference type="KEGG" id="xac:XAC3302"/>
<dbReference type="eggNOG" id="COG2022">
    <property type="taxonomic scope" value="Bacteria"/>
</dbReference>
<dbReference type="HOGENOM" id="CLU_062233_1_0_6"/>
<dbReference type="UniPathway" id="UPA00060"/>
<dbReference type="Proteomes" id="UP000000576">
    <property type="component" value="Chromosome"/>
</dbReference>
<dbReference type="GO" id="GO:0005737">
    <property type="term" value="C:cytoplasm"/>
    <property type="evidence" value="ECO:0007669"/>
    <property type="project" value="UniProtKB-SubCell"/>
</dbReference>
<dbReference type="GO" id="GO:1990107">
    <property type="term" value="F:thiazole synthase activity"/>
    <property type="evidence" value="ECO:0007669"/>
    <property type="project" value="UniProtKB-EC"/>
</dbReference>
<dbReference type="GO" id="GO:0009229">
    <property type="term" value="P:thiamine diphosphate biosynthetic process"/>
    <property type="evidence" value="ECO:0007669"/>
    <property type="project" value="UniProtKB-UniRule"/>
</dbReference>
<dbReference type="CDD" id="cd04728">
    <property type="entry name" value="ThiG"/>
    <property type="match status" value="1"/>
</dbReference>
<dbReference type="FunFam" id="3.20.20.70:FF:000049">
    <property type="entry name" value="Thiazole synthase"/>
    <property type="match status" value="1"/>
</dbReference>
<dbReference type="Gene3D" id="3.20.20.70">
    <property type="entry name" value="Aldolase class I"/>
    <property type="match status" value="1"/>
</dbReference>
<dbReference type="HAMAP" id="MF_00443">
    <property type="entry name" value="ThiG"/>
    <property type="match status" value="1"/>
</dbReference>
<dbReference type="InterPro" id="IPR013785">
    <property type="entry name" value="Aldolase_TIM"/>
</dbReference>
<dbReference type="InterPro" id="IPR033983">
    <property type="entry name" value="Thiazole_synthase_ThiG"/>
</dbReference>
<dbReference type="InterPro" id="IPR008867">
    <property type="entry name" value="ThiG"/>
</dbReference>
<dbReference type="PANTHER" id="PTHR34266">
    <property type="entry name" value="THIAZOLE SYNTHASE"/>
    <property type="match status" value="1"/>
</dbReference>
<dbReference type="PANTHER" id="PTHR34266:SF2">
    <property type="entry name" value="THIAZOLE SYNTHASE"/>
    <property type="match status" value="1"/>
</dbReference>
<dbReference type="Pfam" id="PF05690">
    <property type="entry name" value="ThiG"/>
    <property type="match status" value="1"/>
</dbReference>
<dbReference type="SUPFAM" id="SSF110399">
    <property type="entry name" value="ThiG-like"/>
    <property type="match status" value="1"/>
</dbReference>
<comment type="function">
    <text evidence="1">Catalyzes the rearrangement of 1-deoxy-D-xylulose 5-phosphate (DXP) to produce the thiazole phosphate moiety of thiamine. Sulfur is provided by the thiocarboxylate moiety of the carrier protein ThiS. In vitro, sulfur can be provided by H(2)S.</text>
</comment>
<comment type="catalytic activity">
    <reaction evidence="1">
        <text>[ThiS sulfur-carrier protein]-C-terminal-Gly-aminoethanethioate + 2-iminoacetate + 1-deoxy-D-xylulose 5-phosphate = [ThiS sulfur-carrier protein]-C-terminal Gly-Gly + 2-[(2R,5Z)-2-carboxy-4-methylthiazol-5(2H)-ylidene]ethyl phosphate + 2 H2O + H(+)</text>
        <dbReference type="Rhea" id="RHEA:26297"/>
        <dbReference type="Rhea" id="RHEA-COMP:12909"/>
        <dbReference type="Rhea" id="RHEA-COMP:19908"/>
        <dbReference type="ChEBI" id="CHEBI:15377"/>
        <dbReference type="ChEBI" id="CHEBI:15378"/>
        <dbReference type="ChEBI" id="CHEBI:57792"/>
        <dbReference type="ChEBI" id="CHEBI:62899"/>
        <dbReference type="ChEBI" id="CHEBI:77846"/>
        <dbReference type="ChEBI" id="CHEBI:90778"/>
        <dbReference type="ChEBI" id="CHEBI:232372"/>
        <dbReference type="EC" id="2.8.1.10"/>
    </reaction>
</comment>
<comment type="pathway">
    <text evidence="1">Cofactor biosynthesis; thiamine diphosphate biosynthesis.</text>
</comment>
<comment type="subunit">
    <text evidence="1">Homotetramer. Forms heterodimers with either ThiH or ThiS.</text>
</comment>
<comment type="subcellular location">
    <subcellularLocation>
        <location evidence="1">Cytoplasm</location>
    </subcellularLocation>
</comment>
<comment type="similarity">
    <text evidence="1">Belongs to the ThiG family.</text>
</comment>
<sequence length="264" mass="27938">MTNPAPSDALVIAGKHYRSRLLTGTGKFKDLDETRLATEAAAAEIVTVAIRRVNIGQDPNAPSLLDVLPPERYTLLPNTAGCYTAEDAVRTCRLARELLDGHNLTKLEVLGDEKTLYPDVVQTLKAAEQLVADGFEVMVYTSDDPILAKRLEDIGCVAVMPLAAPIGSGLGIQNKYNLLEIIENAKVPIIVDAGVGTASDAAIAMELGCDGVLMNTAIAGARDPILMASAMRKAIEAGREAFLAGRIPRKRYASASSPVDGVIG</sequence>
<accession>Q8PHF5</accession>
<organism>
    <name type="scientific">Xanthomonas axonopodis pv. citri (strain 306)</name>
    <dbReference type="NCBI Taxonomy" id="190486"/>
    <lineage>
        <taxon>Bacteria</taxon>
        <taxon>Pseudomonadati</taxon>
        <taxon>Pseudomonadota</taxon>
        <taxon>Gammaproteobacteria</taxon>
        <taxon>Lysobacterales</taxon>
        <taxon>Lysobacteraceae</taxon>
        <taxon>Xanthomonas</taxon>
    </lineage>
</organism>
<name>THIG_XANAC</name>
<proteinExistence type="inferred from homology"/>
<evidence type="ECO:0000255" key="1">
    <source>
        <dbReference type="HAMAP-Rule" id="MF_00443"/>
    </source>
</evidence>
<reference key="1">
    <citation type="journal article" date="2002" name="Nature">
        <title>Comparison of the genomes of two Xanthomonas pathogens with differing host specificities.</title>
        <authorList>
            <person name="da Silva A.C.R."/>
            <person name="Ferro J.A."/>
            <person name="Reinach F.C."/>
            <person name="Farah C.S."/>
            <person name="Furlan L.R."/>
            <person name="Quaggio R.B."/>
            <person name="Monteiro-Vitorello C.B."/>
            <person name="Van Sluys M.A."/>
            <person name="Almeida N.F. Jr."/>
            <person name="Alves L.M.C."/>
            <person name="do Amaral A.M."/>
            <person name="Bertolini M.C."/>
            <person name="Camargo L.E.A."/>
            <person name="Camarotte G."/>
            <person name="Cannavan F."/>
            <person name="Cardozo J."/>
            <person name="Chambergo F."/>
            <person name="Ciapina L.P."/>
            <person name="Cicarelli R.M.B."/>
            <person name="Coutinho L.L."/>
            <person name="Cursino-Santos J.R."/>
            <person name="El-Dorry H."/>
            <person name="Faria J.B."/>
            <person name="Ferreira A.J.S."/>
            <person name="Ferreira R.C.C."/>
            <person name="Ferro M.I.T."/>
            <person name="Formighieri E.F."/>
            <person name="Franco M.C."/>
            <person name="Greggio C.C."/>
            <person name="Gruber A."/>
            <person name="Katsuyama A.M."/>
            <person name="Kishi L.T."/>
            <person name="Leite R.P."/>
            <person name="Lemos E.G.M."/>
            <person name="Lemos M.V.F."/>
            <person name="Locali E.C."/>
            <person name="Machado M.A."/>
            <person name="Madeira A.M.B.N."/>
            <person name="Martinez-Rossi N.M."/>
            <person name="Martins E.C."/>
            <person name="Meidanis J."/>
            <person name="Menck C.F.M."/>
            <person name="Miyaki C.Y."/>
            <person name="Moon D.H."/>
            <person name="Moreira L.M."/>
            <person name="Novo M.T.M."/>
            <person name="Okura V.K."/>
            <person name="Oliveira M.C."/>
            <person name="Oliveira V.R."/>
            <person name="Pereira H.A."/>
            <person name="Rossi A."/>
            <person name="Sena J.A.D."/>
            <person name="Silva C."/>
            <person name="de Souza R.F."/>
            <person name="Spinola L.A.F."/>
            <person name="Takita M.A."/>
            <person name="Tamura R.E."/>
            <person name="Teixeira E.C."/>
            <person name="Tezza R.I.D."/>
            <person name="Trindade dos Santos M."/>
            <person name="Truffi D."/>
            <person name="Tsai S.M."/>
            <person name="White F.F."/>
            <person name="Setubal J.C."/>
            <person name="Kitajima J.P."/>
        </authorList>
    </citation>
    <scope>NUCLEOTIDE SEQUENCE [LARGE SCALE GENOMIC DNA]</scope>
    <source>
        <strain>306</strain>
    </source>
</reference>
<feature type="chain" id="PRO_0000162877" description="Thiazole synthase">
    <location>
        <begin position="1"/>
        <end position="264"/>
    </location>
</feature>
<feature type="active site" description="Schiff-base intermediate with DXP" evidence="1">
    <location>
        <position position="106"/>
    </location>
</feature>
<feature type="binding site" evidence="1">
    <location>
        <position position="167"/>
    </location>
    <ligand>
        <name>1-deoxy-D-xylulose 5-phosphate</name>
        <dbReference type="ChEBI" id="CHEBI:57792"/>
    </ligand>
</feature>
<feature type="binding site" evidence="1">
    <location>
        <begin position="193"/>
        <end position="194"/>
    </location>
    <ligand>
        <name>1-deoxy-D-xylulose 5-phosphate</name>
        <dbReference type="ChEBI" id="CHEBI:57792"/>
    </ligand>
</feature>
<feature type="binding site" evidence="1">
    <location>
        <begin position="215"/>
        <end position="216"/>
    </location>
    <ligand>
        <name>1-deoxy-D-xylulose 5-phosphate</name>
        <dbReference type="ChEBI" id="CHEBI:57792"/>
    </ligand>
</feature>
<keyword id="KW-0963">Cytoplasm</keyword>
<keyword id="KW-0704">Schiff base</keyword>
<keyword id="KW-0784">Thiamine biosynthesis</keyword>
<keyword id="KW-0808">Transferase</keyword>
<gene>
    <name evidence="1" type="primary">thiG</name>
    <name type="ordered locus">XAC3302</name>
</gene>
<protein>
    <recommendedName>
        <fullName evidence="1">Thiazole synthase</fullName>
        <ecNumber evidence="1">2.8.1.10</ecNumber>
    </recommendedName>
</protein>